<comment type="function">
    <text evidence="1">DNA-dependent RNA polymerase catalyzes the transcription of DNA into RNA using the four ribonucleoside triphosphates as substrates.</text>
</comment>
<comment type="catalytic activity">
    <reaction evidence="1">
        <text>RNA(n) + a ribonucleoside 5'-triphosphate = RNA(n+1) + diphosphate</text>
        <dbReference type="Rhea" id="RHEA:21248"/>
        <dbReference type="Rhea" id="RHEA-COMP:14527"/>
        <dbReference type="Rhea" id="RHEA-COMP:17342"/>
        <dbReference type="ChEBI" id="CHEBI:33019"/>
        <dbReference type="ChEBI" id="CHEBI:61557"/>
        <dbReference type="ChEBI" id="CHEBI:140395"/>
        <dbReference type="EC" id="2.7.7.6"/>
    </reaction>
</comment>
<comment type="subunit">
    <text evidence="1">Homodimer. The RNAP catalytic core consists of 2 alpha, 1 beta, 1 beta' and 1 omega subunit. When a sigma factor is associated with the core the holoenzyme is formed, which can initiate transcription.</text>
</comment>
<comment type="domain">
    <text evidence="1">The N-terminal domain is essential for RNAP assembly and basal transcription, whereas the C-terminal domain is involved in interaction with transcriptional regulators and with upstream promoter elements.</text>
</comment>
<comment type="similarity">
    <text evidence="1">Belongs to the RNA polymerase alpha chain family.</text>
</comment>
<accession>A3PGN5</accession>
<evidence type="ECO:0000255" key="1">
    <source>
        <dbReference type="HAMAP-Rule" id="MF_00059"/>
    </source>
</evidence>
<gene>
    <name evidence="1" type="primary">rpoA</name>
    <name type="ordered locus">Rsph17029_0385</name>
</gene>
<keyword id="KW-0240">DNA-directed RNA polymerase</keyword>
<keyword id="KW-0548">Nucleotidyltransferase</keyword>
<keyword id="KW-0804">Transcription</keyword>
<keyword id="KW-0808">Transferase</keyword>
<protein>
    <recommendedName>
        <fullName evidence="1">DNA-directed RNA polymerase subunit alpha</fullName>
        <shortName evidence="1">RNAP subunit alpha</shortName>
        <ecNumber evidence="1">2.7.7.6</ecNumber>
    </recommendedName>
    <alternativeName>
        <fullName evidence="1">RNA polymerase subunit alpha</fullName>
    </alternativeName>
    <alternativeName>
        <fullName evidence="1">Transcriptase subunit alpha</fullName>
    </alternativeName>
</protein>
<name>RPOA_CERS1</name>
<sequence>MIHKNWAELIKPTQLVVKPGADPARVATVIAEPLERGFGLTLGNALRRVLLSSLQGAAITSVQIDNVLHEFSSVAGVREDVTDIVLNLKGVSIKMEVEGPKRLSISAKGPGVVTAGDISESNGIEILNKDHVICHLDEGADVFMELTVNTGKGYVAADKNRPEDAPIGLIPIDAIYSPVKKVSYEVTPTREGQVLDYDKLTMRIETDGGLTPDDAVAYAARILQDQLSIFVNFEEPESATRHDVEDGLEFNPLLLKKVDELELSVRSANCLKNDNIVYIGDLIQKTEAEMLRTPNFGRKSLNEIKEVLSGMGLHLGMDVEDWPPENIEDLAKRFEDQF</sequence>
<organism>
    <name type="scientific">Cereibacter sphaeroides (strain ATCC 17029 / ATH 2.4.9)</name>
    <name type="common">Rhodobacter sphaeroides</name>
    <dbReference type="NCBI Taxonomy" id="349101"/>
    <lineage>
        <taxon>Bacteria</taxon>
        <taxon>Pseudomonadati</taxon>
        <taxon>Pseudomonadota</taxon>
        <taxon>Alphaproteobacteria</taxon>
        <taxon>Rhodobacterales</taxon>
        <taxon>Paracoccaceae</taxon>
        <taxon>Cereibacter</taxon>
    </lineage>
</organism>
<proteinExistence type="inferred from homology"/>
<dbReference type="EC" id="2.7.7.6" evidence="1"/>
<dbReference type="EMBL" id="CP000577">
    <property type="protein sequence ID" value="ABN75501.1"/>
    <property type="molecule type" value="Genomic_DNA"/>
</dbReference>
<dbReference type="RefSeq" id="WP_002722536.1">
    <property type="nucleotide sequence ID" value="NC_009049.1"/>
</dbReference>
<dbReference type="SMR" id="A3PGN5"/>
<dbReference type="KEGG" id="rsh:Rsph17029_0385"/>
<dbReference type="HOGENOM" id="CLU_053084_0_1_5"/>
<dbReference type="GO" id="GO:0005737">
    <property type="term" value="C:cytoplasm"/>
    <property type="evidence" value="ECO:0007669"/>
    <property type="project" value="UniProtKB-ARBA"/>
</dbReference>
<dbReference type="GO" id="GO:0000428">
    <property type="term" value="C:DNA-directed RNA polymerase complex"/>
    <property type="evidence" value="ECO:0007669"/>
    <property type="project" value="UniProtKB-KW"/>
</dbReference>
<dbReference type="GO" id="GO:0003677">
    <property type="term" value="F:DNA binding"/>
    <property type="evidence" value="ECO:0007669"/>
    <property type="project" value="UniProtKB-UniRule"/>
</dbReference>
<dbReference type="GO" id="GO:0003899">
    <property type="term" value="F:DNA-directed RNA polymerase activity"/>
    <property type="evidence" value="ECO:0007669"/>
    <property type="project" value="UniProtKB-UniRule"/>
</dbReference>
<dbReference type="GO" id="GO:0046983">
    <property type="term" value="F:protein dimerization activity"/>
    <property type="evidence" value="ECO:0007669"/>
    <property type="project" value="InterPro"/>
</dbReference>
<dbReference type="GO" id="GO:0006351">
    <property type="term" value="P:DNA-templated transcription"/>
    <property type="evidence" value="ECO:0007669"/>
    <property type="project" value="UniProtKB-UniRule"/>
</dbReference>
<dbReference type="CDD" id="cd06928">
    <property type="entry name" value="RNAP_alpha_NTD"/>
    <property type="match status" value="1"/>
</dbReference>
<dbReference type="FunFam" id="1.10.150.20:FF:000001">
    <property type="entry name" value="DNA-directed RNA polymerase subunit alpha"/>
    <property type="match status" value="1"/>
</dbReference>
<dbReference type="FunFam" id="2.170.120.12:FF:000001">
    <property type="entry name" value="DNA-directed RNA polymerase subunit alpha"/>
    <property type="match status" value="1"/>
</dbReference>
<dbReference type="Gene3D" id="1.10.150.20">
    <property type="entry name" value="5' to 3' exonuclease, C-terminal subdomain"/>
    <property type="match status" value="1"/>
</dbReference>
<dbReference type="Gene3D" id="2.170.120.12">
    <property type="entry name" value="DNA-directed RNA polymerase, insert domain"/>
    <property type="match status" value="1"/>
</dbReference>
<dbReference type="Gene3D" id="3.30.1360.10">
    <property type="entry name" value="RNA polymerase, RBP11-like subunit"/>
    <property type="match status" value="1"/>
</dbReference>
<dbReference type="HAMAP" id="MF_00059">
    <property type="entry name" value="RNApol_bact_RpoA"/>
    <property type="match status" value="1"/>
</dbReference>
<dbReference type="InterPro" id="IPR011262">
    <property type="entry name" value="DNA-dir_RNA_pol_insert"/>
</dbReference>
<dbReference type="InterPro" id="IPR011263">
    <property type="entry name" value="DNA-dir_RNA_pol_RpoA/D/Rpb3"/>
</dbReference>
<dbReference type="InterPro" id="IPR011773">
    <property type="entry name" value="DNA-dir_RpoA"/>
</dbReference>
<dbReference type="InterPro" id="IPR036603">
    <property type="entry name" value="RBP11-like"/>
</dbReference>
<dbReference type="InterPro" id="IPR011260">
    <property type="entry name" value="RNAP_asu_C"/>
</dbReference>
<dbReference type="InterPro" id="IPR036643">
    <property type="entry name" value="RNApol_insert_sf"/>
</dbReference>
<dbReference type="NCBIfam" id="NF003513">
    <property type="entry name" value="PRK05182.1-2"/>
    <property type="match status" value="1"/>
</dbReference>
<dbReference type="NCBIfam" id="NF003519">
    <property type="entry name" value="PRK05182.2-5"/>
    <property type="match status" value="1"/>
</dbReference>
<dbReference type="NCBIfam" id="TIGR02027">
    <property type="entry name" value="rpoA"/>
    <property type="match status" value="1"/>
</dbReference>
<dbReference type="Pfam" id="PF01000">
    <property type="entry name" value="RNA_pol_A_bac"/>
    <property type="match status" value="1"/>
</dbReference>
<dbReference type="Pfam" id="PF03118">
    <property type="entry name" value="RNA_pol_A_CTD"/>
    <property type="match status" value="1"/>
</dbReference>
<dbReference type="Pfam" id="PF01193">
    <property type="entry name" value="RNA_pol_L"/>
    <property type="match status" value="1"/>
</dbReference>
<dbReference type="SMART" id="SM00662">
    <property type="entry name" value="RPOLD"/>
    <property type="match status" value="1"/>
</dbReference>
<dbReference type="SUPFAM" id="SSF47789">
    <property type="entry name" value="C-terminal domain of RNA polymerase alpha subunit"/>
    <property type="match status" value="1"/>
</dbReference>
<dbReference type="SUPFAM" id="SSF56553">
    <property type="entry name" value="Insert subdomain of RNA polymerase alpha subunit"/>
    <property type="match status" value="1"/>
</dbReference>
<dbReference type="SUPFAM" id="SSF55257">
    <property type="entry name" value="RBP11-like subunits of RNA polymerase"/>
    <property type="match status" value="1"/>
</dbReference>
<reference key="1">
    <citation type="submission" date="2007-02" db="EMBL/GenBank/DDBJ databases">
        <title>Complete sequence of chromosome 1 of Rhodobacter sphaeroides ATCC 17029.</title>
        <authorList>
            <person name="Copeland A."/>
            <person name="Lucas S."/>
            <person name="Lapidus A."/>
            <person name="Barry K."/>
            <person name="Detter J.C."/>
            <person name="Glavina del Rio T."/>
            <person name="Hammon N."/>
            <person name="Israni S."/>
            <person name="Dalin E."/>
            <person name="Tice H."/>
            <person name="Pitluck S."/>
            <person name="Kiss H."/>
            <person name="Brettin T."/>
            <person name="Bruce D."/>
            <person name="Han C."/>
            <person name="Tapia R."/>
            <person name="Gilna P."/>
            <person name="Schmutz J."/>
            <person name="Larimer F."/>
            <person name="Land M."/>
            <person name="Hauser L."/>
            <person name="Kyrpides N."/>
            <person name="Mikhailova N."/>
            <person name="Richardson P."/>
            <person name="Mackenzie C."/>
            <person name="Choudhary M."/>
            <person name="Donohue T.J."/>
            <person name="Kaplan S."/>
        </authorList>
    </citation>
    <scope>NUCLEOTIDE SEQUENCE [LARGE SCALE GENOMIC DNA]</scope>
    <source>
        <strain>ATCC 17029 / ATH 2.4.9</strain>
    </source>
</reference>
<feature type="chain" id="PRO_0000296861" description="DNA-directed RNA polymerase subunit alpha">
    <location>
        <begin position="1"/>
        <end position="338"/>
    </location>
</feature>
<feature type="region of interest" description="Alpha N-terminal domain (alpha-NTD)" evidence="1">
    <location>
        <begin position="1"/>
        <end position="234"/>
    </location>
</feature>
<feature type="region of interest" description="Alpha C-terminal domain (alpha-CTD)" evidence="1">
    <location>
        <begin position="250"/>
        <end position="338"/>
    </location>
</feature>